<protein>
    <recommendedName>
        <fullName evidence="5">2-oxoglutarate-dependent dioxygenase 19</fullName>
        <ecNumber evidence="1 3">1.14.11.-</ecNumber>
    </recommendedName>
    <alternativeName>
        <fullName evidence="5">Melatonin 2-hydroxylase</fullName>
    </alternativeName>
</protein>
<evidence type="ECO:0000255" key="1">
    <source>
        <dbReference type="PROSITE-ProRule" id="PRU00805"/>
    </source>
</evidence>
<evidence type="ECO:0000256" key="2">
    <source>
        <dbReference type="SAM" id="MobiDB-lite"/>
    </source>
</evidence>
<evidence type="ECO:0000269" key="3">
    <source>
    </source>
</evidence>
<evidence type="ECO:0000269" key="4">
    <source>
    </source>
</evidence>
<evidence type="ECO:0000303" key="5">
    <source>
    </source>
</evidence>
<evidence type="ECO:0000305" key="6"/>
<evidence type="ECO:0000312" key="7">
    <source>
        <dbReference type="EMBL" id="BAD09760.1"/>
    </source>
</evidence>
<evidence type="ECO:0000312" key="8">
    <source>
        <dbReference type="EMBL" id="BAD10270.1"/>
    </source>
</evidence>
<evidence type="ECO:0000312" key="9">
    <source>
        <dbReference type="EMBL" id="BAF23972.1"/>
    </source>
</evidence>
<comment type="function">
    <text evidence="3">Involved in melatonin degradation (PubMed:25728912). Catalyzes the hydroxylation of melatonin to produce 2-hydroxymelatonin (PubMed:25728912).</text>
</comment>
<comment type="catalytic activity">
    <reaction evidence="3">
        <text>melatonin + 2-oxoglutarate + O2 = 2-hydroxymelatonin + succinate + CO2</text>
        <dbReference type="Rhea" id="RHEA:62512"/>
        <dbReference type="ChEBI" id="CHEBI:15379"/>
        <dbReference type="ChEBI" id="CHEBI:16526"/>
        <dbReference type="ChEBI" id="CHEBI:16796"/>
        <dbReference type="ChEBI" id="CHEBI:16810"/>
        <dbReference type="ChEBI" id="CHEBI:30031"/>
        <dbReference type="ChEBI" id="CHEBI:145792"/>
    </reaction>
    <physiologicalReaction direction="left-to-right" evidence="3">
        <dbReference type="Rhea" id="RHEA:62513"/>
    </physiologicalReaction>
</comment>
<comment type="cofactor">
    <cofactor evidence="1 3">
        <name>Fe(2+)</name>
        <dbReference type="ChEBI" id="CHEBI:29033"/>
    </cofactor>
    <text evidence="1">Binds 1 Fe(2+) ion per subunit.</text>
</comment>
<comment type="cofactor">
    <cofactor evidence="3">
        <name>L-ascorbate</name>
        <dbReference type="ChEBI" id="CHEBI:38290"/>
    </cofactor>
</comment>
<comment type="biophysicochemical properties">
    <kinetics>
        <KM evidence="3">302 uM for melatonin</KM>
        <Vmax evidence="3">9.3 pmol/sec/mg enzyme toward melatonine</Vmax>
    </kinetics>
    <phDependence>
        <text evidence="3">Optimum pH is 7.4.</text>
    </phDependence>
    <temperatureDependence>
        <text evidence="3">Optimum temperature is 45 degrees Celsius.</text>
    </temperatureDependence>
</comment>
<comment type="subcellular location">
    <subcellularLocation>
        <location evidence="4">Cytoplasm</location>
    </subcellularLocation>
</comment>
<comment type="tissue specificity">
    <text evidence="3">Expressed in shoots.</text>
</comment>
<comment type="induction">
    <text evidence="4">Induced by cadmium.</text>
</comment>
<comment type="similarity">
    <text evidence="6">Belongs to the iron/ascorbate-dependent oxidoreductase family.</text>
</comment>
<feature type="chain" id="PRO_0000449519" description="2-oxoglutarate-dependent dioxygenase 19">
    <location>
        <begin position="1"/>
        <end position="337"/>
    </location>
</feature>
<feature type="domain" description="Fe2OG dioxygenase" evidence="1">
    <location>
        <begin position="179"/>
        <end position="283"/>
    </location>
</feature>
<feature type="region of interest" description="Disordered" evidence="2">
    <location>
        <begin position="1"/>
        <end position="25"/>
    </location>
</feature>
<feature type="binding site" evidence="1">
    <location>
        <position position="208"/>
    </location>
    <ligand>
        <name>Fe cation</name>
        <dbReference type="ChEBI" id="CHEBI:24875"/>
    </ligand>
</feature>
<feature type="binding site" evidence="1">
    <location>
        <position position="210"/>
    </location>
    <ligand>
        <name>Fe cation</name>
        <dbReference type="ChEBI" id="CHEBI:24875"/>
    </ligand>
</feature>
<feature type="binding site" evidence="1">
    <location>
        <position position="264"/>
    </location>
    <ligand>
        <name>Fe cation</name>
        <dbReference type="ChEBI" id="CHEBI:24875"/>
    </ligand>
</feature>
<feature type="binding site" evidence="1">
    <location>
        <position position="274"/>
    </location>
    <ligand>
        <name>2-oxoglutarate</name>
        <dbReference type="ChEBI" id="CHEBI:16810"/>
    </ligand>
</feature>
<keyword id="KW-0963">Cytoplasm</keyword>
<keyword id="KW-0223">Dioxygenase</keyword>
<keyword id="KW-0408">Iron</keyword>
<keyword id="KW-0479">Metal-binding</keyword>
<keyword id="KW-0560">Oxidoreductase</keyword>
<keyword id="KW-1185">Reference proteome</keyword>
<keyword id="KW-0847">Vitamin C</keyword>
<name>ODD19_ORYSJ</name>
<proteinExistence type="evidence at protein level"/>
<sequence>MVAPSRLPSHEEQSAAAAADGSATPSQGIPVVDLGVLINGAADERSRAIRDLGRACEDWGFFMVTNHGVPEALREAIMDACKELFRLPLEEKKEYMRAKPMDPIRIGTGFYSVVDAVPCRRDYLKMFSHPEFHCPEKPAKLREIATEYATCTRALLLELTKAISESLGLAGGRLSEALNLESCFQILVGNHYPACSRPDEQAMGLSAHSDHGLLTLLFQNGVDGLQVKHDGEWLLAKPLPGSFFVIAGDQLEIVTNGRYKGVLHRAVVGGEQSRMSFVSLIGPCMDTVVEPLPEMAADGRGLEFRGIRYRDYMEMQQSNSINEKTALDIVRVMHQAG</sequence>
<accession>Q6Z244</accession>
<accession>A0A0P0XHE5</accession>
<dbReference type="EC" id="1.14.11.-" evidence="1 3"/>
<dbReference type="EMBL" id="AP004643">
    <property type="protein sequence ID" value="BAD09760.1"/>
    <property type="molecule type" value="Genomic_DNA"/>
</dbReference>
<dbReference type="EMBL" id="AP005391">
    <property type="protein sequence ID" value="BAD10270.1"/>
    <property type="molecule type" value="Genomic_DNA"/>
</dbReference>
<dbReference type="EMBL" id="AP008214">
    <property type="protein sequence ID" value="BAF23972.1"/>
    <property type="molecule type" value="Genomic_DNA"/>
</dbReference>
<dbReference type="EMBL" id="AP014964">
    <property type="protein sequence ID" value="BAT05916.1"/>
    <property type="molecule type" value="Genomic_DNA"/>
</dbReference>
<dbReference type="EMBL" id="AK065790">
    <property type="protein sequence ID" value="BAG89680.1"/>
    <property type="molecule type" value="mRNA"/>
</dbReference>
<dbReference type="SMR" id="Q6Z244"/>
<dbReference type="STRING" id="39947.Q6Z244"/>
<dbReference type="PaxDb" id="39947-Q6Z244"/>
<dbReference type="EnsemblPlants" id="Os08t0480200-01">
    <property type="protein sequence ID" value="Os08t0480200-01"/>
    <property type="gene ID" value="Os08g0480200"/>
</dbReference>
<dbReference type="GeneID" id="4345848"/>
<dbReference type="Gramene" id="Os08t0480200-01">
    <property type="protein sequence ID" value="Os08t0480200-01"/>
    <property type="gene ID" value="Os08g0480200"/>
</dbReference>
<dbReference type="KEGG" id="dosa:Os08g0480200"/>
<dbReference type="KEGG" id="osa:4345848"/>
<dbReference type="eggNOG" id="KOG0143">
    <property type="taxonomic scope" value="Eukaryota"/>
</dbReference>
<dbReference type="HOGENOM" id="CLU_010119_16_4_1"/>
<dbReference type="InParanoid" id="Q6Z244"/>
<dbReference type="OMA" id="GMKHRDY"/>
<dbReference type="OrthoDB" id="288590at2759"/>
<dbReference type="Proteomes" id="UP000000763">
    <property type="component" value="Chromosome 8"/>
</dbReference>
<dbReference type="Proteomes" id="UP000059680">
    <property type="component" value="Chromosome 8"/>
</dbReference>
<dbReference type="GO" id="GO:0005737">
    <property type="term" value="C:cytoplasm"/>
    <property type="evidence" value="ECO:0007669"/>
    <property type="project" value="UniProtKB-SubCell"/>
</dbReference>
<dbReference type="GO" id="GO:0051213">
    <property type="term" value="F:dioxygenase activity"/>
    <property type="evidence" value="ECO:0007669"/>
    <property type="project" value="UniProtKB-KW"/>
</dbReference>
<dbReference type="GO" id="GO:0031418">
    <property type="term" value="F:L-ascorbic acid binding"/>
    <property type="evidence" value="ECO:0007669"/>
    <property type="project" value="UniProtKB-KW"/>
</dbReference>
<dbReference type="GO" id="GO:0046872">
    <property type="term" value="F:metal ion binding"/>
    <property type="evidence" value="ECO:0007669"/>
    <property type="project" value="UniProtKB-KW"/>
</dbReference>
<dbReference type="FunFam" id="2.60.120.330:FF:000042">
    <property type="entry name" value="Flavanone 3-dioxygenase 3"/>
    <property type="match status" value="1"/>
</dbReference>
<dbReference type="Gene3D" id="2.60.120.330">
    <property type="entry name" value="B-lactam Antibiotic, Isopenicillin N Synthase, Chain"/>
    <property type="match status" value="1"/>
</dbReference>
<dbReference type="InterPro" id="IPR026992">
    <property type="entry name" value="DIOX_N"/>
</dbReference>
<dbReference type="InterPro" id="IPR044861">
    <property type="entry name" value="IPNS-like_FE2OG_OXY"/>
</dbReference>
<dbReference type="InterPro" id="IPR027443">
    <property type="entry name" value="IPNS-like_sf"/>
</dbReference>
<dbReference type="InterPro" id="IPR005123">
    <property type="entry name" value="Oxoglu/Fe-dep_dioxygenase_dom"/>
</dbReference>
<dbReference type="InterPro" id="IPR050295">
    <property type="entry name" value="Plant_2OG-oxidoreductases"/>
</dbReference>
<dbReference type="PANTHER" id="PTHR47991">
    <property type="entry name" value="OXOGLUTARATE/IRON-DEPENDENT DIOXYGENASE"/>
    <property type="match status" value="1"/>
</dbReference>
<dbReference type="Pfam" id="PF03171">
    <property type="entry name" value="2OG-FeII_Oxy"/>
    <property type="match status" value="1"/>
</dbReference>
<dbReference type="Pfam" id="PF14226">
    <property type="entry name" value="DIOX_N"/>
    <property type="match status" value="1"/>
</dbReference>
<dbReference type="SUPFAM" id="SSF51197">
    <property type="entry name" value="Clavaminate synthase-like"/>
    <property type="match status" value="1"/>
</dbReference>
<dbReference type="PROSITE" id="PS51471">
    <property type="entry name" value="FE2OG_OXY"/>
    <property type="match status" value="1"/>
</dbReference>
<reference key="1">
    <citation type="journal article" date="2005" name="Nature">
        <title>The map-based sequence of the rice genome.</title>
        <authorList>
            <consortium name="International rice genome sequencing project (IRGSP)"/>
        </authorList>
    </citation>
    <scope>NUCLEOTIDE SEQUENCE [LARGE SCALE GENOMIC DNA]</scope>
    <source>
        <strain>cv. Nipponbare</strain>
    </source>
</reference>
<reference key="2">
    <citation type="journal article" date="2008" name="Nucleic Acids Res.">
        <title>The rice annotation project database (RAP-DB): 2008 update.</title>
        <authorList>
            <consortium name="The rice annotation project (RAP)"/>
        </authorList>
    </citation>
    <scope>GENOME REANNOTATION</scope>
    <source>
        <strain>cv. Nipponbare</strain>
    </source>
</reference>
<reference key="3">
    <citation type="journal article" date="2013" name="Rice">
        <title>Improvement of the Oryza sativa Nipponbare reference genome using next generation sequence and optical map data.</title>
        <authorList>
            <person name="Kawahara Y."/>
            <person name="de la Bastide M."/>
            <person name="Hamilton J.P."/>
            <person name="Kanamori H."/>
            <person name="McCombie W.R."/>
            <person name="Ouyang S."/>
            <person name="Schwartz D.C."/>
            <person name="Tanaka T."/>
            <person name="Wu J."/>
            <person name="Zhou S."/>
            <person name="Childs K.L."/>
            <person name="Davidson R.M."/>
            <person name="Lin H."/>
            <person name="Quesada-Ocampo L."/>
            <person name="Vaillancourt B."/>
            <person name="Sakai H."/>
            <person name="Lee S.S."/>
            <person name="Kim J."/>
            <person name="Numa H."/>
            <person name="Itoh T."/>
            <person name="Buell C.R."/>
            <person name="Matsumoto T."/>
        </authorList>
    </citation>
    <scope>GENOME REANNOTATION</scope>
    <source>
        <strain>cv. Nipponbare</strain>
    </source>
</reference>
<reference key="4">
    <citation type="journal article" date="2003" name="Science">
        <title>Collection, mapping, and annotation of over 28,000 cDNA clones from japonica rice.</title>
        <authorList>
            <consortium name="The rice full-length cDNA consortium"/>
        </authorList>
    </citation>
    <scope>NUCLEOTIDE SEQUENCE [LARGE SCALE MRNA]</scope>
    <source>
        <strain>cv. Nipponbare</strain>
    </source>
</reference>
<reference key="5">
    <citation type="journal article" date="2015" name="J. Pineal Res.">
        <title>Molecular cloning of melatonin 2-hydroxylase responsible for 2-hydroxymelatonin production in rice (Oryza sativa).</title>
        <authorList>
            <person name="Byeon Y."/>
            <person name="Back K."/>
        </authorList>
    </citation>
    <scope>FUNCTION</scope>
    <scope>CATALYTIC ACTIVITY</scope>
    <scope>COFACTOR</scope>
    <scope>BIOPHYSICOCHEMICAL PROPERTIES</scope>
    <scope>TISSUE SPECIFICITY</scope>
</reference>
<reference key="6">
    <citation type="journal article" date="2015" name="J. Pineal Res.">
        <title>Coordinated regulation of melatonin synthesis and degradation genes in rice leaves in response to cadmium treatment.</title>
        <authorList>
            <person name="Byeon Y."/>
            <person name="Lee H.Y."/>
            <person name="Hwang O.J."/>
            <person name="Lee H.J."/>
            <person name="Lee K."/>
            <person name="Back K."/>
        </authorList>
    </citation>
    <scope>SUBCELLULAR LOCATION</scope>
    <scope>INDUCTION BY CADMIUM</scope>
</reference>
<organism>
    <name type="scientific">Oryza sativa subsp. japonica</name>
    <name type="common">Rice</name>
    <dbReference type="NCBI Taxonomy" id="39947"/>
    <lineage>
        <taxon>Eukaryota</taxon>
        <taxon>Viridiplantae</taxon>
        <taxon>Streptophyta</taxon>
        <taxon>Embryophyta</taxon>
        <taxon>Tracheophyta</taxon>
        <taxon>Spermatophyta</taxon>
        <taxon>Magnoliopsida</taxon>
        <taxon>Liliopsida</taxon>
        <taxon>Poales</taxon>
        <taxon>Poaceae</taxon>
        <taxon>BOP clade</taxon>
        <taxon>Oryzoideae</taxon>
        <taxon>Oryzeae</taxon>
        <taxon>Oryzinae</taxon>
        <taxon>Oryza</taxon>
        <taxon>Oryza sativa</taxon>
    </lineage>
</organism>
<gene>
    <name evidence="5" type="primary">2ODD19</name>
    <name evidence="9" type="ordered locus">Os08g0480200</name>
    <name evidence="6" type="ordered locus">LOC_Os08g37456</name>
    <name evidence="7" type="ORF">OJ1113_A10.32</name>
    <name evidence="8" type="ORF">OSJNBb0092C08.2</name>
</gene>